<proteinExistence type="inferred from homology"/>
<feature type="chain" id="PRO_1000129527" description="UDP-2,3-diacylglucosamine hydrolase">
    <location>
        <begin position="1"/>
        <end position="240"/>
    </location>
</feature>
<feature type="binding site" evidence="1">
    <location>
        <position position="8"/>
    </location>
    <ligand>
        <name>Mn(2+)</name>
        <dbReference type="ChEBI" id="CHEBI:29035"/>
        <label>1</label>
    </ligand>
</feature>
<feature type="binding site" evidence="1">
    <location>
        <position position="10"/>
    </location>
    <ligand>
        <name>Mn(2+)</name>
        <dbReference type="ChEBI" id="CHEBI:29035"/>
        <label>1</label>
    </ligand>
</feature>
<feature type="binding site" evidence="1">
    <location>
        <position position="41"/>
    </location>
    <ligand>
        <name>Mn(2+)</name>
        <dbReference type="ChEBI" id="CHEBI:29035"/>
        <label>1</label>
    </ligand>
</feature>
<feature type="binding site" evidence="1">
    <location>
        <position position="41"/>
    </location>
    <ligand>
        <name>Mn(2+)</name>
        <dbReference type="ChEBI" id="CHEBI:29035"/>
        <label>2</label>
    </ligand>
</feature>
<feature type="binding site" evidence="1">
    <location>
        <begin position="79"/>
        <end position="80"/>
    </location>
    <ligand>
        <name>substrate</name>
    </ligand>
</feature>
<feature type="binding site" evidence="1">
    <location>
        <position position="79"/>
    </location>
    <ligand>
        <name>Mn(2+)</name>
        <dbReference type="ChEBI" id="CHEBI:29035"/>
        <label>2</label>
    </ligand>
</feature>
<feature type="binding site" evidence="1">
    <location>
        <position position="114"/>
    </location>
    <ligand>
        <name>Mn(2+)</name>
        <dbReference type="ChEBI" id="CHEBI:29035"/>
        <label>2</label>
    </ligand>
</feature>
<feature type="binding site" evidence="1">
    <location>
        <position position="122"/>
    </location>
    <ligand>
        <name>substrate</name>
    </ligand>
</feature>
<feature type="binding site" evidence="1">
    <location>
        <position position="160"/>
    </location>
    <ligand>
        <name>substrate</name>
    </ligand>
</feature>
<feature type="binding site" evidence="1">
    <location>
        <position position="164"/>
    </location>
    <ligand>
        <name>substrate</name>
    </ligand>
</feature>
<feature type="binding site" evidence="1">
    <location>
        <position position="167"/>
    </location>
    <ligand>
        <name>substrate</name>
    </ligand>
</feature>
<feature type="binding site" evidence="1">
    <location>
        <position position="195"/>
    </location>
    <ligand>
        <name>Mn(2+)</name>
        <dbReference type="ChEBI" id="CHEBI:29035"/>
        <label>2</label>
    </ligand>
</feature>
<feature type="binding site" evidence="1">
    <location>
        <position position="195"/>
    </location>
    <ligand>
        <name>substrate</name>
    </ligand>
</feature>
<feature type="binding site" evidence="1">
    <location>
        <position position="197"/>
    </location>
    <ligand>
        <name>Mn(2+)</name>
        <dbReference type="ChEBI" id="CHEBI:29035"/>
        <label>1</label>
    </ligand>
</feature>
<accession>B4F1M8</accession>
<comment type="function">
    <text evidence="1">Hydrolyzes the pyrophosphate bond of UDP-2,3-diacylglucosamine to yield 2,3-diacylglucosamine 1-phosphate (lipid X) and UMP by catalyzing the attack of water at the alpha-P atom. Involved in the biosynthesis of lipid A, a phosphorylated glycolipid that anchors the lipopolysaccharide to the outer membrane of the cell.</text>
</comment>
<comment type="catalytic activity">
    <reaction evidence="1">
        <text>UDP-2-N,3-O-bis[(3R)-3-hydroxytetradecanoyl]-alpha-D-glucosamine + H2O = 2-N,3-O-bis[(3R)-3-hydroxytetradecanoyl]-alpha-D-glucosaminyl 1-phosphate + UMP + 2 H(+)</text>
        <dbReference type="Rhea" id="RHEA:25213"/>
        <dbReference type="ChEBI" id="CHEBI:15377"/>
        <dbReference type="ChEBI" id="CHEBI:15378"/>
        <dbReference type="ChEBI" id="CHEBI:57865"/>
        <dbReference type="ChEBI" id="CHEBI:57957"/>
        <dbReference type="ChEBI" id="CHEBI:78847"/>
        <dbReference type="EC" id="3.6.1.54"/>
    </reaction>
</comment>
<comment type="cofactor">
    <cofactor evidence="1">
        <name>Mn(2+)</name>
        <dbReference type="ChEBI" id="CHEBI:29035"/>
    </cofactor>
    <text evidence="1">Binds 2 Mn(2+) ions per subunit in a binuclear metal center.</text>
</comment>
<comment type="pathway">
    <text evidence="1">Glycolipid biosynthesis; lipid IV(A) biosynthesis; lipid IV(A) from (3R)-3-hydroxytetradecanoyl-[acyl-carrier-protein] and UDP-N-acetyl-alpha-D-glucosamine: step 4/6.</text>
</comment>
<comment type="subcellular location">
    <subcellularLocation>
        <location evidence="1">Cell inner membrane</location>
        <topology evidence="1">Peripheral membrane protein</topology>
        <orientation evidence="1">Cytoplasmic side</orientation>
    </subcellularLocation>
</comment>
<comment type="similarity">
    <text evidence="1">Belongs to the LpxH family.</text>
</comment>
<organism>
    <name type="scientific">Proteus mirabilis (strain HI4320)</name>
    <dbReference type="NCBI Taxonomy" id="529507"/>
    <lineage>
        <taxon>Bacteria</taxon>
        <taxon>Pseudomonadati</taxon>
        <taxon>Pseudomonadota</taxon>
        <taxon>Gammaproteobacteria</taxon>
        <taxon>Enterobacterales</taxon>
        <taxon>Morganellaceae</taxon>
        <taxon>Proteus</taxon>
    </lineage>
</organism>
<protein>
    <recommendedName>
        <fullName evidence="1">UDP-2,3-diacylglucosamine hydrolase</fullName>
        <ecNumber evidence="1">3.6.1.54</ecNumber>
    </recommendedName>
    <alternativeName>
        <fullName evidence="1">UDP-2,3-diacylglucosamine diphosphatase</fullName>
    </alternativeName>
</protein>
<name>LPXH_PROMH</name>
<sequence>MCTLFIADLHLSEHEPAITAGFLRFLQEQAIHANALYILGDFFDFWIGDDDPNPLHQRIAQALMALKNAGVPCYFIHGNRDFLIGSRFAKESGMTLLPQEKVLEIEQHRILILHGDTLCTDDDAYQRYRKKVHNKFIQRLFLLLPLTIRLRIAKKMRSRSQSSNQYKSEAIMDVNAQAVINTFKQFNTQWMIHGHTHRPAIHTVDIDGKPHYRGVLGAWHTEGSMFKVTSDKIELIQFPF</sequence>
<reference key="1">
    <citation type="journal article" date="2008" name="J. Bacteriol.">
        <title>Complete genome sequence of uropathogenic Proteus mirabilis, a master of both adherence and motility.</title>
        <authorList>
            <person name="Pearson M.M."/>
            <person name="Sebaihia M."/>
            <person name="Churcher C."/>
            <person name="Quail M.A."/>
            <person name="Seshasayee A.S."/>
            <person name="Luscombe N.M."/>
            <person name="Abdellah Z."/>
            <person name="Arrosmith C."/>
            <person name="Atkin B."/>
            <person name="Chillingworth T."/>
            <person name="Hauser H."/>
            <person name="Jagels K."/>
            <person name="Moule S."/>
            <person name="Mungall K."/>
            <person name="Norbertczak H."/>
            <person name="Rabbinowitsch E."/>
            <person name="Walker D."/>
            <person name="Whithead S."/>
            <person name="Thomson N.R."/>
            <person name="Rather P.N."/>
            <person name="Parkhill J."/>
            <person name="Mobley H.L.T."/>
        </authorList>
    </citation>
    <scope>NUCLEOTIDE SEQUENCE [LARGE SCALE GENOMIC DNA]</scope>
    <source>
        <strain>HI4320</strain>
    </source>
</reference>
<keyword id="KW-0997">Cell inner membrane</keyword>
<keyword id="KW-1003">Cell membrane</keyword>
<keyword id="KW-0378">Hydrolase</keyword>
<keyword id="KW-0441">Lipid A biosynthesis</keyword>
<keyword id="KW-0444">Lipid biosynthesis</keyword>
<keyword id="KW-0443">Lipid metabolism</keyword>
<keyword id="KW-0464">Manganese</keyword>
<keyword id="KW-0472">Membrane</keyword>
<keyword id="KW-0479">Metal-binding</keyword>
<keyword id="KW-1185">Reference proteome</keyword>
<evidence type="ECO:0000255" key="1">
    <source>
        <dbReference type="HAMAP-Rule" id="MF_00575"/>
    </source>
</evidence>
<gene>
    <name evidence="1" type="primary">lpxH</name>
    <name type="ordered locus">PMI2160</name>
</gene>
<dbReference type="EC" id="3.6.1.54" evidence="1"/>
<dbReference type="EMBL" id="AM942759">
    <property type="protein sequence ID" value="CAR44299.1"/>
    <property type="molecule type" value="Genomic_DNA"/>
</dbReference>
<dbReference type="RefSeq" id="WP_004244250.1">
    <property type="nucleotide sequence ID" value="NC_010554.1"/>
</dbReference>
<dbReference type="SMR" id="B4F1M8"/>
<dbReference type="EnsemblBacteria" id="CAR44299">
    <property type="protein sequence ID" value="CAR44299"/>
    <property type="gene ID" value="PMI2160"/>
</dbReference>
<dbReference type="GeneID" id="6799936"/>
<dbReference type="KEGG" id="pmr:PMI2160"/>
<dbReference type="eggNOG" id="COG2908">
    <property type="taxonomic scope" value="Bacteria"/>
</dbReference>
<dbReference type="HOGENOM" id="CLU_074586_0_0_6"/>
<dbReference type="UniPathway" id="UPA00359">
    <property type="reaction ID" value="UER00480"/>
</dbReference>
<dbReference type="Proteomes" id="UP000008319">
    <property type="component" value="Chromosome"/>
</dbReference>
<dbReference type="GO" id="GO:0005737">
    <property type="term" value="C:cytoplasm"/>
    <property type="evidence" value="ECO:0007669"/>
    <property type="project" value="InterPro"/>
</dbReference>
<dbReference type="GO" id="GO:0019897">
    <property type="term" value="C:extrinsic component of plasma membrane"/>
    <property type="evidence" value="ECO:0007669"/>
    <property type="project" value="UniProtKB-UniRule"/>
</dbReference>
<dbReference type="GO" id="GO:0030145">
    <property type="term" value="F:manganese ion binding"/>
    <property type="evidence" value="ECO:0007669"/>
    <property type="project" value="UniProtKB-UniRule"/>
</dbReference>
<dbReference type="GO" id="GO:0008758">
    <property type="term" value="F:UDP-2,3-diacylglucosamine hydrolase activity"/>
    <property type="evidence" value="ECO:0007669"/>
    <property type="project" value="UniProtKB-UniRule"/>
</dbReference>
<dbReference type="GO" id="GO:0009245">
    <property type="term" value="P:lipid A biosynthetic process"/>
    <property type="evidence" value="ECO:0007669"/>
    <property type="project" value="UniProtKB-UniRule"/>
</dbReference>
<dbReference type="CDD" id="cd07398">
    <property type="entry name" value="MPP_YbbF-LpxH"/>
    <property type="match status" value="1"/>
</dbReference>
<dbReference type="Gene3D" id="3.60.21.10">
    <property type="match status" value="1"/>
</dbReference>
<dbReference type="HAMAP" id="MF_00575">
    <property type="entry name" value="LpxH"/>
    <property type="match status" value="1"/>
</dbReference>
<dbReference type="InterPro" id="IPR004843">
    <property type="entry name" value="Calcineurin-like_PHP_ApaH"/>
</dbReference>
<dbReference type="InterPro" id="IPR043461">
    <property type="entry name" value="LpxH-like"/>
</dbReference>
<dbReference type="InterPro" id="IPR029052">
    <property type="entry name" value="Metallo-depent_PP-like"/>
</dbReference>
<dbReference type="InterPro" id="IPR010138">
    <property type="entry name" value="UDP-diacylglucosamine_Hdrlase"/>
</dbReference>
<dbReference type="NCBIfam" id="TIGR01854">
    <property type="entry name" value="lipid_A_lpxH"/>
    <property type="match status" value="1"/>
</dbReference>
<dbReference type="NCBIfam" id="NF003743">
    <property type="entry name" value="PRK05340.1"/>
    <property type="match status" value="1"/>
</dbReference>
<dbReference type="PANTHER" id="PTHR34990:SF1">
    <property type="entry name" value="UDP-2,3-DIACYLGLUCOSAMINE HYDROLASE"/>
    <property type="match status" value="1"/>
</dbReference>
<dbReference type="PANTHER" id="PTHR34990">
    <property type="entry name" value="UDP-2,3-DIACYLGLUCOSAMINE HYDROLASE-RELATED"/>
    <property type="match status" value="1"/>
</dbReference>
<dbReference type="Pfam" id="PF00149">
    <property type="entry name" value="Metallophos"/>
    <property type="match status" value="1"/>
</dbReference>
<dbReference type="SUPFAM" id="SSF56300">
    <property type="entry name" value="Metallo-dependent phosphatases"/>
    <property type="match status" value="1"/>
</dbReference>